<comment type="catalytic activity">
    <reaction evidence="1">
        <text>tRNA(His) + L-histidine + ATP = L-histidyl-tRNA(His) + AMP + diphosphate + H(+)</text>
        <dbReference type="Rhea" id="RHEA:17313"/>
        <dbReference type="Rhea" id="RHEA-COMP:9665"/>
        <dbReference type="Rhea" id="RHEA-COMP:9689"/>
        <dbReference type="ChEBI" id="CHEBI:15378"/>
        <dbReference type="ChEBI" id="CHEBI:30616"/>
        <dbReference type="ChEBI" id="CHEBI:33019"/>
        <dbReference type="ChEBI" id="CHEBI:57595"/>
        <dbReference type="ChEBI" id="CHEBI:78442"/>
        <dbReference type="ChEBI" id="CHEBI:78527"/>
        <dbReference type="ChEBI" id="CHEBI:456215"/>
        <dbReference type="EC" id="6.1.1.21"/>
    </reaction>
</comment>
<comment type="subunit">
    <text evidence="1">Homodimer.</text>
</comment>
<comment type="subcellular location">
    <subcellularLocation>
        <location evidence="1">Cytoplasm</location>
    </subcellularLocation>
</comment>
<comment type="similarity">
    <text evidence="1">Belongs to the class-II aminoacyl-tRNA synthetase family.</text>
</comment>
<name>SYH_HAEDU</name>
<reference key="1">
    <citation type="submission" date="2003-06" db="EMBL/GenBank/DDBJ databases">
        <title>The complete genome sequence of Haemophilus ducreyi.</title>
        <authorList>
            <person name="Munson R.S. Jr."/>
            <person name="Ray W.C."/>
            <person name="Mahairas G."/>
            <person name="Sabo P."/>
            <person name="Mungur R."/>
            <person name="Johnson L."/>
            <person name="Nguyen D."/>
            <person name="Wang J."/>
            <person name="Forst C."/>
            <person name="Hood L."/>
        </authorList>
    </citation>
    <scope>NUCLEOTIDE SEQUENCE [LARGE SCALE GENOMIC DNA]</scope>
    <source>
        <strain>35000HP / ATCC 700724</strain>
    </source>
</reference>
<evidence type="ECO:0000255" key="1">
    <source>
        <dbReference type="HAMAP-Rule" id="MF_00127"/>
    </source>
</evidence>
<gene>
    <name evidence="1" type="primary">hisS</name>
    <name type="ordered locus">HD_1039</name>
</gene>
<dbReference type="EC" id="6.1.1.21" evidence="1"/>
<dbReference type="EMBL" id="AE017143">
    <property type="protein sequence ID" value="AAP95915.1"/>
    <property type="molecule type" value="Genomic_DNA"/>
</dbReference>
<dbReference type="RefSeq" id="WP_010944965.1">
    <property type="nucleotide sequence ID" value="NC_002940.2"/>
</dbReference>
<dbReference type="SMR" id="Q7VME1"/>
<dbReference type="STRING" id="233412.HD_1039"/>
<dbReference type="KEGG" id="hdu:HD_1039"/>
<dbReference type="eggNOG" id="COG0124">
    <property type="taxonomic scope" value="Bacteria"/>
</dbReference>
<dbReference type="HOGENOM" id="CLU_025113_1_1_6"/>
<dbReference type="OrthoDB" id="9800814at2"/>
<dbReference type="Proteomes" id="UP000001022">
    <property type="component" value="Chromosome"/>
</dbReference>
<dbReference type="GO" id="GO:0005737">
    <property type="term" value="C:cytoplasm"/>
    <property type="evidence" value="ECO:0007669"/>
    <property type="project" value="UniProtKB-SubCell"/>
</dbReference>
<dbReference type="GO" id="GO:0005524">
    <property type="term" value="F:ATP binding"/>
    <property type="evidence" value="ECO:0007669"/>
    <property type="project" value="UniProtKB-UniRule"/>
</dbReference>
<dbReference type="GO" id="GO:0004821">
    <property type="term" value="F:histidine-tRNA ligase activity"/>
    <property type="evidence" value="ECO:0007669"/>
    <property type="project" value="UniProtKB-UniRule"/>
</dbReference>
<dbReference type="GO" id="GO:0006427">
    <property type="term" value="P:histidyl-tRNA aminoacylation"/>
    <property type="evidence" value="ECO:0007669"/>
    <property type="project" value="UniProtKB-UniRule"/>
</dbReference>
<dbReference type="CDD" id="cd00773">
    <property type="entry name" value="HisRS-like_core"/>
    <property type="match status" value="1"/>
</dbReference>
<dbReference type="CDD" id="cd00859">
    <property type="entry name" value="HisRS_anticodon"/>
    <property type="match status" value="1"/>
</dbReference>
<dbReference type="FunFam" id="3.30.930.10:FF:000005">
    <property type="entry name" value="Histidine--tRNA ligase"/>
    <property type="match status" value="1"/>
</dbReference>
<dbReference type="Gene3D" id="3.40.50.800">
    <property type="entry name" value="Anticodon-binding domain"/>
    <property type="match status" value="1"/>
</dbReference>
<dbReference type="Gene3D" id="3.30.930.10">
    <property type="entry name" value="Bira Bifunctional Protein, Domain 2"/>
    <property type="match status" value="1"/>
</dbReference>
<dbReference type="HAMAP" id="MF_00127">
    <property type="entry name" value="His_tRNA_synth"/>
    <property type="match status" value="1"/>
</dbReference>
<dbReference type="InterPro" id="IPR006195">
    <property type="entry name" value="aa-tRNA-synth_II"/>
</dbReference>
<dbReference type="InterPro" id="IPR045864">
    <property type="entry name" value="aa-tRNA-synth_II/BPL/LPL"/>
</dbReference>
<dbReference type="InterPro" id="IPR004154">
    <property type="entry name" value="Anticodon-bd"/>
</dbReference>
<dbReference type="InterPro" id="IPR036621">
    <property type="entry name" value="Anticodon-bd_dom_sf"/>
</dbReference>
<dbReference type="InterPro" id="IPR015807">
    <property type="entry name" value="His-tRNA-ligase"/>
</dbReference>
<dbReference type="InterPro" id="IPR041715">
    <property type="entry name" value="HisRS-like_core"/>
</dbReference>
<dbReference type="InterPro" id="IPR004516">
    <property type="entry name" value="HisRS/HisZ"/>
</dbReference>
<dbReference type="InterPro" id="IPR033656">
    <property type="entry name" value="HisRS_anticodon"/>
</dbReference>
<dbReference type="NCBIfam" id="TIGR00442">
    <property type="entry name" value="hisS"/>
    <property type="match status" value="1"/>
</dbReference>
<dbReference type="PANTHER" id="PTHR43707:SF1">
    <property type="entry name" value="HISTIDINE--TRNA LIGASE, MITOCHONDRIAL-RELATED"/>
    <property type="match status" value="1"/>
</dbReference>
<dbReference type="PANTHER" id="PTHR43707">
    <property type="entry name" value="HISTIDYL-TRNA SYNTHETASE"/>
    <property type="match status" value="1"/>
</dbReference>
<dbReference type="Pfam" id="PF03129">
    <property type="entry name" value="HGTP_anticodon"/>
    <property type="match status" value="1"/>
</dbReference>
<dbReference type="Pfam" id="PF13393">
    <property type="entry name" value="tRNA-synt_His"/>
    <property type="match status" value="1"/>
</dbReference>
<dbReference type="PIRSF" id="PIRSF001549">
    <property type="entry name" value="His-tRNA_synth"/>
    <property type="match status" value="1"/>
</dbReference>
<dbReference type="SUPFAM" id="SSF52954">
    <property type="entry name" value="Class II aaRS ABD-related"/>
    <property type="match status" value="1"/>
</dbReference>
<dbReference type="SUPFAM" id="SSF55681">
    <property type="entry name" value="Class II aaRS and biotin synthetases"/>
    <property type="match status" value="1"/>
</dbReference>
<dbReference type="PROSITE" id="PS50862">
    <property type="entry name" value="AA_TRNA_LIGASE_II"/>
    <property type="match status" value="1"/>
</dbReference>
<organism>
    <name type="scientific">Haemophilus ducreyi (strain 35000HP / ATCC 700724)</name>
    <dbReference type="NCBI Taxonomy" id="233412"/>
    <lineage>
        <taxon>Bacteria</taxon>
        <taxon>Pseudomonadati</taxon>
        <taxon>Pseudomonadota</taxon>
        <taxon>Gammaproteobacteria</taxon>
        <taxon>Pasteurellales</taxon>
        <taxon>Pasteurellaceae</taxon>
        <taxon>Haemophilus</taxon>
    </lineage>
</organism>
<feature type="chain" id="PRO_0000136170" description="Histidine--tRNA ligase">
    <location>
        <begin position="1"/>
        <end position="423"/>
    </location>
</feature>
<protein>
    <recommendedName>
        <fullName evidence="1">Histidine--tRNA ligase</fullName>
        <ecNumber evidence="1">6.1.1.21</ecNumber>
    </recommendedName>
    <alternativeName>
        <fullName evidence="1">Histidyl-tRNA synthetase</fullName>
        <shortName evidence="1">HisRS</shortName>
    </alternativeName>
</protein>
<accession>Q7VME1</accession>
<sequence>MAKTIQAIRGMNDCATTESPLWQWVESNVRNVLASYGYSEVRMPIVESTPLFARAIGEVTDVVSKEMYTFWDNDEQLTLRPEGTAGCVRAAIQHGWIYNNEQRLWYMGPMFRHERPQKGRYRQFHQAGVEVFGIANPEIDAELILLTARLWQALGIEQHLSLQLNSIGSLAARANYRAALVDFLANHTALMNDEEKERLVKNPLRILDTKNQALQAVLNDAPKLLDYLDEESRQHFAQLCQLLDAMGIRYEVNPKLVRGLDYYNKTVFEWVTSALGSQGTVCGGGRYDGLVEQLGGHATQGVGFAIGLERLVLLVQEVNKTMSLPKAVDIYLVYAGDNTTLKAFQIAEQIRNALPQLRVMTHCSGGNFKKQFKRADKVEAKIALVIGESELATQTIVLKELQNSSEQISIDQADLLAELSKRF</sequence>
<keyword id="KW-0030">Aminoacyl-tRNA synthetase</keyword>
<keyword id="KW-0067">ATP-binding</keyword>
<keyword id="KW-0963">Cytoplasm</keyword>
<keyword id="KW-0436">Ligase</keyword>
<keyword id="KW-0547">Nucleotide-binding</keyword>
<keyword id="KW-0648">Protein biosynthesis</keyword>
<keyword id="KW-1185">Reference proteome</keyword>
<proteinExistence type="inferred from homology"/>